<name>CA1G_CONCN</name>
<reference key="1">
    <citation type="journal article" date="2012" name="J. Proteomics">
        <title>Large-scale discovery of conopeptides and conoproteins in the injectable venom of a fish-hunting cone snail using a combined proteomic and transcriptomic approach.</title>
        <authorList>
            <person name="Violette A."/>
            <person name="Biass D."/>
            <person name="Dutertre S."/>
            <person name="Koua D."/>
            <person name="Piquemal D."/>
            <person name="Pierrat F."/>
            <person name="Stocklin R."/>
            <person name="Favreau P."/>
        </authorList>
    </citation>
    <scope>NUCLEOTIDE SEQUENCE [MRNA]</scope>
    <scope>AMIDATION AT CYS-48</scope>
    <scope>MASS SPECTROMETRY</scope>
    <scope>IDENTIFICATION BY MASS SPECTROMETRY</scope>
    <source>
        <tissue>Venom</tissue>
        <tissue>Venom duct</tissue>
    </source>
</reference>
<comment type="subcellular location">
    <subcellularLocation>
        <location>Secreted</location>
    </subcellularLocation>
</comment>
<comment type="tissue specificity">
    <text>Expressed by the venom duct.</text>
</comment>
<comment type="domain">
    <text>The cysteine framework is I (CC-C-C). Alpha3/5 pattern.</text>
</comment>
<comment type="mass spectrometry" mass="1353.54" method="Electrospray" evidence="4"/>
<comment type="miscellaneous">
    <text evidence="6">Found in injectable (milked) (IV) venom.</text>
</comment>
<comment type="similarity">
    <text evidence="5">Belongs to the conotoxin A superfamily.</text>
</comment>
<dbReference type="GO" id="GO:0005576">
    <property type="term" value="C:extracellular region"/>
    <property type="evidence" value="ECO:0007669"/>
    <property type="project" value="UniProtKB-SubCell"/>
</dbReference>
<dbReference type="GO" id="GO:0030550">
    <property type="term" value="F:acetylcholine receptor inhibitor activity"/>
    <property type="evidence" value="ECO:0007669"/>
    <property type="project" value="InterPro"/>
</dbReference>
<dbReference type="GO" id="GO:0090729">
    <property type="term" value="F:toxin activity"/>
    <property type="evidence" value="ECO:0007669"/>
    <property type="project" value="UniProtKB-KW"/>
</dbReference>
<dbReference type="InterPro" id="IPR009958">
    <property type="entry name" value="Conotoxin_a-typ"/>
</dbReference>
<dbReference type="Pfam" id="PF07365">
    <property type="entry name" value="Toxin_8"/>
    <property type="match status" value="1"/>
</dbReference>
<feature type="signal peptide" evidence="2">
    <location>
        <begin position="1" status="less than"/>
        <end position="7"/>
    </location>
</feature>
<feature type="propeptide" id="PRO_0000419874">
    <location>
        <begin position="8"/>
        <end position="35"/>
    </location>
</feature>
<feature type="peptide" id="PRO_0000419875" description="Alpha-conotoxin CnIG">
    <location>
        <begin position="37"/>
        <end position="48"/>
    </location>
</feature>
<feature type="region of interest" description="Disordered" evidence="3">
    <location>
        <begin position="1"/>
        <end position="26"/>
    </location>
</feature>
<feature type="compositionally biased region" description="Polar residues" evidence="3">
    <location>
        <begin position="1"/>
        <end position="13"/>
    </location>
</feature>
<feature type="compositionally biased region" description="Basic and acidic residues" evidence="3">
    <location>
        <begin position="14"/>
        <end position="26"/>
    </location>
</feature>
<feature type="modified residue" description="Cysteine amide" evidence="4">
    <location>
        <position position="48"/>
    </location>
</feature>
<feature type="disulfide bond" evidence="1">
    <location>
        <begin position="37"/>
        <end position="42"/>
    </location>
</feature>
<feature type="disulfide bond" evidence="1">
    <location>
        <begin position="38"/>
        <end position="48"/>
    </location>
</feature>
<feature type="non-terminal residue">
    <location>
        <position position="1"/>
    </location>
</feature>
<protein>
    <recommendedName>
        <fullName>Alpha-conotoxin CnIG</fullName>
    </recommendedName>
</protein>
<accession>P0DKP8</accession>
<proteinExistence type="evidence at protein level"/>
<evidence type="ECO:0000250" key="1">
    <source>
        <dbReference type="UniProtKB" id="P01519"/>
    </source>
</evidence>
<evidence type="ECO:0000255" key="2"/>
<evidence type="ECO:0000256" key="3">
    <source>
        <dbReference type="SAM" id="MobiDB-lite"/>
    </source>
</evidence>
<evidence type="ECO:0000269" key="4">
    <source>
    </source>
</evidence>
<evidence type="ECO:0000305" key="5"/>
<evidence type="ECO:0000305" key="6">
    <source>
    </source>
</evidence>
<sequence length="50" mass="5603">LTTTVVSFPSDSASDGRDNEAKDERSDMYELKRNGRCCHPACGKYFKCGR</sequence>
<keyword id="KW-0027">Amidation</keyword>
<keyword id="KW-1015">Disulfide bond</keyword>
<keyword id="KW-0964">Secreted</keyword>
<keyword id="KW-0732">Signal</keyword>
<keyword id="KW-0800">Toxin</keyword>
<organism>
    <name type="scientific">Conus consors</name>
    <name type="common">Singed cone</name>
    <dbReference type="NCBI Taxonomy" id="101297"/>
    <lineage>
        <taxon>Eukaryota</taxon>
        <taxon>Metazoa</taxon>
        <taxon>Spiralia</taxon>
        <taxon>Lophotrochozoa</taxon>
        <taxon>Mollusca</taxon>
        <taxon>Gastropoda</taxon>
        <taxon>Caenogastropoda</taxon>
        <taxon>Neogastropoda</taxon>
        <taxon>Conoidea</taxon>
        <taxon>Conidae</taxon>
        <taxon>Conus</taxon>
        <taxon>Pionoconus</taxon>
    </lineage>
</organism>